<comment type="subcellular location">
    <subcellularLocation>
        <location evidence="1">Cytoplasm</location>
    </subcellularLocation>
</comment>
<comment type="similarity">
    <text evidence="1">Belongs to the TACO1 family.</text>
</comment>
<keyword id="KW-0963">Cytoplasm</keyword>
<keyword id="KW-0238">DNA-binding</keyword>
<keyword id="KW-1185">Reference proteome</keyword>
<keyword id="KW-0804">Transcription</keyword>
<keyword id="KW-0805">Transcription regulation</keyword>
<proteinExistence type="inferred from homology"/>
<accession>Q3JES6</accession>
<gene>
    <name type="ordered locus">Noc_0137</name>
</gene>
<evidence type="ECO:0000255" key="1">
    <source>
        <dbReference type="HAMAP-Rule" id="MF_00693"/>
    </source>
</evidence>
<protein>
    <recommendedName>
        <fullName evidence="1">Probable transcriptional regulatory protein Noc_0137</fullName>
    </recommendedName>
</protein>
<dbReference type="EMBL" id="CP000127">
    <property type="protein sequence ID" value="ABA56670.1"/>
    <property type="molecule type" value="Genomic_DNA"/>
</dbReference>
<dbReference type="RefSeq" id="WP_002812852.1">
    <property type="nucleotide sequence ID" value="NC_007484.1"/>
</dbReference>
<dbReference type="SMR" id="Q3JES6"/>
<dbReference type="FunCoup" id="Q3JES6">
    <property type="interactions" value="542"/>
</dbReference>
<dbReference type="STRING" id="323261.Noc_0137"/>
<dbReference type="KEGG" id="noc:Noc_0137"/>
<dbReference type="eggNOG" id="COG0217">
    <property type="taxonomic scope" value="Bacteria"/>
</dbReference>
<dbReference type="HOGENOM" id="CLU_062974_2_2_6"/>
<dbReference type="InParanoid" id="Q3JES6"/>
<dbReference type="Proteomes" id="UP000006838">
    <property type="component" value="Chromosome"/>
</dbReference>
<dbReference type="GO" id="GO:0005829">
    <property type="term" value="C:cytosol"/>
    <property type="evidence" value="ECO:0007669"/>
    <property type="project" value="TreeGrafter"/>
</dbReference>
<dbReference type="GO" id="GO:0003677">
    <property type="term" value="F:DNA binding"/>
    <property type="evidence" value="ECO:0007669"/>
    <property type="project" value="UniProtKB-UniRule"/>
</dbReference>
<dbReference type="GO" id="GO:0006355">
    <property type="term" value="P:regulation of DNA-templated transcription"/>
    <property type="evidence" value="ECO:0007669"/>
    <property type="project" value="UniProtKB-UniRule"/>
</dbReference>
<dbReference type="FunFam" id="1.10.10.200:FF:000001">
    <property type="entry name" value="Probable transcriptional regulatory protein YebC"/>
    <property type="match status" value="1"/>
</dbReference>
<dbReference type="FunFam" id="3.30.70.980:FF:000002">
    <property type="entry name" value="Probable transcriptional regulatory protein YebC"/>
    <property type="match status" value="1"/>
</dbReference>
<dbReference type="Gene3D" id="1.10.10.200">
    <property type="match status" value="1"/>
</dbReference>
<dbReference type="Gene3D" id="3.30.70.980">
    <property type="match status" value="2"/>
</dbReference>
<dbReference type="HAMAP" id="MF_00693">
    <property type="entry name" value="Transcrip_reg_TACO1"/>
    <property type="match status" value="1"/>
</dbReference>
<dbReference type="InterPro" id="IPR017856">
    <property type="entry name" value="Integrase-like_N"/>
</dbReference>
<dbReference type="InterPro" id="IPR048300">
    <property type="entry name" value="TACO1_YebC-like_2nd/3rd_dom"/>
</dbReference>
<dbReference type="InterPro" id="IPR049083">
    <property type="entry name" value="TACO1_YebC_N"/>
</dbReference>
<dbReference type="InterPro" id="IPR002876">
    <property type="entry name" value="Transcrip_reg_TACO1-like"/>
</dbReference>
<dbReference type="InterPro" id="IPR026564">
    <property type="entry name" value="Transcrip_reg_TACO1-like_dom3"/>
</dbReference>
<dbReference type="InterPro" id="IPR029072">
    <property type="entry name" value="YebC-like"/>
</dbReference>
<dbReference type="NCBIfam" id="NF001030">
    <property type="entry name" value="PRK00110.1"/>
    <property type="match status" value="1"/>
</dbReference>
<dbReference type="NCBIfam" id="NF009044">
    <property type="entry name" value="PRK12378.1"/>
    <property type="match status" value="1"/>
</dbReference>
<dbReference type="NCBIfam" id="TIGR01033">
    <property type="entry name" value="YebC/PmpR family DNA-binding transcriptional regulator"/>
    <property type="match status" value="1"/>
</dbReference>
<dbReference type="PANTHER" id="PTHR12532:SF6">
    <property type="entry name" value="TRANSCRIPTIONAL REGULATORY PROTEIN YEBC-RELATED"/>
    <property type="match status" value="1"/>
</dbReference>
<dbReference type="PANTHER" id="PTHR12532">
    <property type="entry name" value="TRANSLATIONAL ACTIVATOR OF CYTOCHROME C OXIDASE 1"/>
    <property type="match status" value="1"/>
</dbReference>
<dbReference type="Pfam" id="PF20772">
    <property type="entry name" value="TACO1_YebC_N"/>
    <property type="match status" value="1"/>
</dbReference>
<dbReference type="Pfam" id="PF01709">
    <property type="entry name" value="Transcrip_reg"/>
    <property type="match status" value="1"/>
</dbReference>
<dbReference type="SUPFAM" id="SSF75625">
    <property type="entry name" value="YebC-like"/>
    <property type="match status" value="1"/>
</dbReference>
<name>Y137_NITOC</name>
<organism>
    <name type="scientific">Nitrosococcus oceani (strain ATCC 19707 / BCRC 17464 / JCM 30415 / NCIMB 11848 / C-107)</name>
    <dbReference type="NCBI Taxonomy" id="323261"/>
    <lineage>
        <taxon>Bacteria</taxon>
        <taxon>Pseudomonadati</taxon>
        <taxon>Pseudomonadota</taxon>
        <taxon>Gammaproteobacteria</taxon>
        <taxon>Chromatiales</taxon>
        <taxon>Chromatiaceae</taxon>
        <taxon>Nitrosococcus</taxon>
    </lineage>
</organism>
<reference key="1">
    <citation type="journal article" date="2006" name="Appl. Environ. Microbiol.">
        <title>Complete genome sequence of the marine, chemolithoautotrophic, ammonia-oxidizing bacterium Nitrosococcus oceani ATCC 19707.</title>
        <authorList>
            <person name="Klotz M.G."/>
            <person name="Arp D.J."/>
            <person name="Chain P.S.G."/>
            <person name="El-Sheikh A.F."/>
            <person name="Hauser L.J."/>
            <person name="Hommes N.G."/>
            <person name="Larimer F.W."/>
            <person name="Malfatti S.A."/>
            <person name="Norton J.M."/>
            <person name="Poret-Peterson A.T."/>
            <person name="Vergez L.M."/>
            <person name="Ward B.B."/>
        </authorList>
    </citation>
    <scope>NUCLEOTIDE SEQUENCE [LARGE SCALE GENOMIC DNA]</scope>
    <source>
        <strain>ATCC 19707 / BCRC 17464 / JCM 30415 / NCIMB 11848 / C-107</strain>
    </source>
</reference>
<feature type="chain" id="PRO_0000257090" description="Probable transcriptional regulatory protein Noc_0137">
    <location>
        <begin position="1"/>
        <end position="248"/>
    </location>
</feature>
<sequence>MAGHSKWANIQYRKGAQDAKRGKLFTRLIREITVAARLEGGDPATSPRLRTAIDKAFAANMPKDNIERAIKRGTGDLEGVAYEEVRYEGYGPYGVAVMVDCMTDNRNRTVAEIRHVFSKWGGNLGTDGSVAYLFSKKGIISYSKESNEDAIMEVAIEGGAEDVVTNEDSSIDVFTEPEEFSTVKKALDEAGLKAEQAEITQHASTSVSLALEEARKMLDFLDALEELDDVQQVYSNADFSEEILAQLG</sequence>